<dbReference type="EMBL" id="GG662504">
    <property type="protein sequence ID" value="EAS03068.2"/>
    <property type="molecule type" value="Genomic_DNA"/>
</dbReference>
<dbReference type="RefSeq" id="XP_001023313.2">
    <property type="nucleotide sequence ID" value="XM_001023313.3"/>
</dbReference>
<dbReference type="PDB" id="4V8P">
    <property type="method" value="X-ray"/>
    <property type="resolution" value="3.52 A"/>
    <property type="chains" value="BO/EO/GO=1-185, CO=1-147"/>
</dbReference>
<dbReference type="PDBsum" id="4V8P"/>
<dbReference type="SMR" id="P0DJ60"/>
<dbReference type="FunCoup" id="P0DJ60">
    <property type="interactions" value="478"/>
</dbReference>
<dbReference type="IntAct" id="P0DJ60">
    <property type="interactions" value="1"/>
</dbReference>
<dbReference type="STRING" id="312017.P0DJ60"/>
<dbReference type="EnsemblProtists" id="EAS03068">
    <property type="protein sequence ID" value="EAS03068"/>
    <property type="gene ID" value="TTHERM_00444510"/>
</dbReference>
<dbReference type="KEGG" id="tet:TTHERM_00444510"/>
<dbReference type="eggNOG" id="KOG1696">
    <property type="taxonomic scope" value="Eukaryota"/>
</dbReference>
<dbReference type="HOGENOM" id="CLU_083919_0_1_1"/>
<dbReference type="InParanoid" id="P0DJ60"/>
<dbReference type="OMA" id="NRVWIDP"/>
<dbReference type="OrthoDB" id="304986at2759"/>
<dbReference type="Proteomes" id="UP000009168">
    <property type="component" value="Unassembled WGS sequence"/>
</dbReference>
<dbReference type="GO" id="GO:0022625">
    <property type="term" value="C:cytosolic large ribosomal subunit"/>
    <property type="evidence" value="ECO:0007669"/>
    <property type="project" value="InterPro"/>
</dbReference>
<dbReference type="GO" id="GO:0003723">
    <property type="term" value="F:RNA binding"/>
    <property type="evidence" value="ECO:0007669"/>
    <property type="project" value="InterPro"/>
</dbReference>
<dbReference type="GO" id="GO:0003735">
    <property type="term" value="F:structural constituent of ribosome"/>
    <property type="evidence" value="ECO:0007669"/>
    <property type="project" value="InterPro"/>
</dbReference>
<dbReference type="GO" id="GO:0006412">
    <property type="term" value="P:translation"/>
    <property type="evidence" value="ECO:0007669"/>
    <property type="project" value="InterPro"/>
</dbReference>
<dbReference type="CDD" id="cd01417">
    <property type="entry name" value="Ribosomal_L19e_E"/>
    <property type="match status" value="1"/>
</dbReference>
<dbReference type="FunFam" id="1.10.1200.240:FF:000001">
    <property type="entry name" value="Ribosomal protein L19"/>
    <property type="match status" value="1"/>
</dbReference>
<dbReference type="FunFam" id="1.10.1650.10:FF:000001">
    <property type="entry name" value="Ribosomal protein L19"/>
    <property type="match status" value="1"/>
</dbReference>
<dbReference type="Gene3D" id="1.10.1200.240">
    <property type="match status" value="1"/>
</dbReference>
<dbReference type="Gene3D" id="1.10.1650.10">
    <property type="match status" value="1"/>
</dbReference>
<dbReference type="InterPro" id="IPR035970">
    <property type="entry name" value="60S_ribosomal_eL19_sf"/>
</dbReference>
<dbReference type="InterPro" id="IPR039547">
    <property type="entry name" value="Ribosomal_eL19"/>
</dbReference>
<dbReference type="InterPro" id="IPR000196">
    <property type="entry name" value="Ribosomal_eL19_dom"/>
</dbReference>
<dbReference type="InterPro" id="IPR015972">
    <property type="entry name" value="Ribosomal_eL19_dom1"/>
</dbReference>
<dbReference type="InterPro" id="IPR033935">
    <property type="entry name" value="Ribosomal_eL19_euk"/>
</dbReference>
<dbReference type="NCBIfam" id="NF006343">
    <property type="entry name" value="PRK08570.1"/>
    <property type="match status" value="1"/>
</dbReference>
<dbReference type="PANTHER" id="PTHR10722">
    <property type="entry name" value="60S RIBOSOMAL PROTEIN L19"/>
    <property type="match status" value="1"/>
</dbReference>
<dbReference type="Pfam" id="PF01280">
    <property type="entry name" value="Ribosomal_L19e"/>
    <property type="match status" value="1"/>
</dbReference>
<dbReference type="Pfam" id="PF25476">
    <property type="entry name" value="Ribosomal_L19e_C"/>
    <property type="match status" value="1"/>
</dbReference>
<dbReference type="SMART" id="SM01416">
    <property type="entry name" value="Ribosomal_L19e"/>
    <property type="match status" value="1"/>
</dbReference>
<dbReference type="SUPFAM" id="SSF48140">
    <property type="entry name" value="Ribosomal protein L19 (L19e)"/>
    <property type="match status" value="1"/>
</dbReference>
<gene>
    <name type="primary">RPL19</name>
    <name type="ORF">TTHERM_00444510A</name>
</gene>
<proteinExistence type="evidence at protein level"/>
<name>RL19_TETTS</name>
<accession>P0DJ60</accession>
<feature type="chain" id="PRO_0000413503" description="Large ribosomal subunit protein eL19">
    <location>
        <begin position="1"/>
        <end position="185"/>
    </location>
</feature>
<feature type="region of interest" description="Disordered" evidence="1">
    <location>
        <begin position="152"/>
        <end position="185"/>
    </location>
</feature>
<keyword id="KW-0002">3D-structure</keyword>
<keyword id="KW-1185">Reference proteome</keyword>
<keyword id="KW-0687">Ribonucleoprotein</keyword>
<keyword id="KW-0689">Ribosomal protein</keyword>
<organism>
    <name type="scientific">Tetrahymena thermophila (strain SB210)</name>
    <dbReference type="NCBI Taxonomy" id="312017"/>
    <lineage>
        <taxon>Eukaryota</taxon>
        <taxon>Sar</taxon>
        <taxon>Alveolata</taxon>
        <taxon>Ciliophora</taxon>
        <taxon>Intramacronucleata</taxon>
        <taxon>Oligohymenophorea</taxon>
        <taxon>Hymenostomatida</taxon>
        <taxon>Tetrahymenina</taxon>
        <taxon>Tetrahymenidae</taxon>
        <taxon>Tetrahymena</taxon>
    </lineage>
</organism>
<sequence>MVSLRLQKRLAASVLKCGQKRLWLDPNESSEISMANSRASIRKLIKDGLVMKRSTVIHSRSRARAFLEAKRKGRHTGSGKRKGTRNARMPTKVLWMRRQRVLRRLLRKYRAAKKIDKHQYHEFYLGSKGNLYKNKTVLIEAIHVSKADKIKSDKLTSQQEARRAKNTASRAKRNEKAQIVAKVDV</sequence>
<protein>
    <recommendedName>
        <fullName evidence="2">Large ribosomal subunit protein eL19</fullName>
    </recommendedName>
    <alternativeName>
        <fullName>60S ribosomal protein L19</fullName>
    </alternativeName>
</protein>
<evidence type="ECO:0000256" key="1">
    <source>
        <dbReference type="SAM" id="MobiDB-lite"/>
    </source>
</evidence>
<evidence type="ECO:0000305" key="2"/>
<comment type="similarity">
    <text evidence="2">Belongs to the eukaryotic ribosomal protein eL19 family.</text>
</comment>
<reference key="1">
    <citation type="journal article" date="2006" name="PLoS Biol.">
        <title>Macronuclear genome sequence of the ciliate Tetrahymena thermophila, a model eukaryote.</title>
        <authorList>
            <person name="Eisen J.A."/>
            <person name="Coyne R.S."/>
            <person name="Wu M."/>
            <person name="Wu D."/>
            <person name="Thiagarajan M."/>
            <person name="Wortman J.R."/>
            <person name="Badger J.H."/>
            <person name="Ren Q."/>
            <person name="Amedeo P."/>
            <person name="Jones K.M."/>
            <person name="Tallon L.J."/>
            <person name="Delcher A.L."/>
            <person name="Salzberg S.L."/>
            <person name="Silva J.C."/>
            <person name="Haas B.J."/>
            <person name="Majoros W.H."/>
            <person name="Farzad M."/>
            <person name="Carlton J.M."/>
            <person name="Smith R.K. Jr."/>
            <person name="Garg J."/>
            <person name="Pearlman R.E."/>
            <person name="Karrer K.M."/>
            <person name="Sun L."/>
            <person name="Manning G."/>
            <person name="Elde N.C."/>
            <person name="Turkewitz A.P."/>
            <person name="Asai D.J."/>
            <person name="Wilkes D.E."/>
            <person name="Wang Y."/>
            <person name="Cai H."/>
            <person name="Collins K."/>
            <person name="Stewart B.A."/>
            <person name="Lee S.R."/>
            <person name="Wilamowska K."/>
            <person name="Weinberg Z."/>
            <person name="Ruzzo W.L."/>
            <person name="Wloga D."/>
            <person name="Gaertig J."/>
            <person name="Frankel J."/>
            <person name="Tsao C.-C."/>
            <person name="Gorovsky M.A."/>
            <person name="Keeling P.J."/>
            <person name="Waller R.F."/>
            <person name="Patron N.J."/>
            <person name="Cherry J.M."/>
            <person name="Stover N.A."/>
            <person name="Krieger C.J."/>
            <person name="del Toro C."/>
            <person name="Ryder H.F."/>
            <person name="Williamson S.C."/>
            <person name="Barbeau R.A."/>
            <person name="Hamilton E.P."/>
            <person name="Orias E."/>
        </authorList>
    </citation>
    <scope>NUCLEOTIDE SEQUENCE [LARGE SCALE GENOMIC DNA]</scope>
    <source>
        <strain>SB210</strain>
    </source>
</reference>
<reference key="2">
    <citation type="journal article" date="2011" name="Science">
        <title>Crystal structure of the eukaryotic 60S ribosomal subunit in complex with initiation factor 6.</title>
        <authorList>
            <person name="Klinge S."/>
            <person name="Voigts-Hoffmann F."/>
            <person name="Leibundgut M."/>
            <person name="Arpagaus S."/>
            <person name="Ban N."/>
        </authorList>
    </citation>
    <scope>X-RAY CRYSTALLOGRAPHY (3.52 ANGSTROMS) OF 60S RIBOSOME</scope>
</reference>